<reference key="1">
    <citation type="journal article" date="2001" name="Proc. Natl. Acad. Sci. U.S.A.">
        <title>Analysis of the chromosome sequence of the legume symbiont Sinorhizobium meliloti strain 1021.</title>
        <authorList>
            <person name="Capela D."/>
            <person name="Barloy-Hubler F."/>
            <person name="Gouzy J."/>
            <person name="Bothe G."/>
            <person name="Ampe F."/>
            <person name="Batut J."/>
            <person name="Boistard P."/>
            <person name="Becker A."/>
            <person name="Boutry M."/>
            <person name="Cadieu E."/>
            <person name="Dreano S."/>
            <person name="Gloux S."/>
            <person name="Godrie T."/>
            <person name="Goffeau A."/>
            <person name="Kahn D."/>
            <person name="Kiss E."/>
            <person name="Lelaure V."/>
            <person name="Masuy D."/>
            <person name="Pohl T."/>
            <person name="Portetelle D."/>
            <person name="Puehler A."/>
            <person name="Purnelle B."/>
            <person name="Ramsperger U."/>
            <person name="Renard C."/>
            <person name="Thebault P."/>
            <person name="Vandenbol M."/>
            <person name="Weidner S."/>
            <person name="Galibert F."/>
        </authorList>
    </citation>
    <scope>NUCLEOTIDE SEQUENCE [LARGE SCALE GENOMIC DNA]</scope>
    <source>
        <strain>1021</strain>
    </source>
</reference>
<reference key="2">
    <citation type="journal article" date="2001" name="Science">
        <title>The composite genome of the legume symbiont Sinorhizobium meliloti.</title>
        <authorList>
            <person name="Galibert F."/>
            <person name="Finan T.M."/>
            <person name="Long S.R."/>
            <person name="Puehler A."/>
            <person name="Abola P."/>
            <person name="Ampe F."/>
            <person name="Barloy-Hubler F."/>
            <person name="Barnett M.J."/>
            <person name="Becker A."/>
            <person name="Boistard P."/>
            <person name="Bothe G."/>
            <person name="Boutry M."/>
            <person name="Bowser L."/>
            <person name="Buhrmester J."/>
            <person name="Cadieu E."/>
            <person name="Capela D."/>
            <person name="Chain P."/>
            <person name="Cowie A."/>
            <person name="Davis R.W."/>
            <person name="Dreano S."/>
            <person name="Federspiel N.A."/>
            <person name="Fisher R.F."/>
            <person name="Gloux S."/>
            <person name="Godrie T."/>
            <person name="Goffeau A."/>
            <person name="Golding B."/>
            <person name="Gouzy J."/>
            <person name="Gurjal M."/>
            <person name="Hernandez-Lucas I."/>
            <person name="Hong A."/>
            <person name="Huizar L."/>
            <person name="Hyman R.W."/>
            <person name="Jones T."/>
            <person name="Kahn D."/>
            <person name="Kahn M.L."/>
            <person name="Kalman S."/>
            <person name="Keating D.H."/>
            <person name="Kiss E."/>
            <person name="Komp C."/>
            <person name="Lelaure V."/>
            <person name="Masuy D."/>
            <person name="Palm C."/>
            <person name="Peck M.C."/>
            <person name="Pohl T.M."/>
            <person name="Portetelle D."/>
            <person name="Purnelle B."/>
            <person name="Ramsperger U."/>
            <person name="Surzycki R."/>
            <person name="Thebault P."/>
            <person name="Vandenbol M."/>
            <person name="Vorhoelter F.J."/>
            <person name="Weidner S."/>
            <person name="Wells D.H."/>
            <person name="Wong K."/>
            <person name="Yeh K.-C."/>
            <person name="Batut J."/>
        </authorList>
    </citation>
    <scope>NUCLEOTIDE SEQUENCE [LARGE SCALE GENOMIC DNA]</scope>
    <source>
        <strain>1021</strain>
    </source>
</reference>
<dbReference type="EC" id="7.1.1.-" evidence="1"/>
<dbReference type="EMBL" id="AL591688">
    <property type="protein sequence ID" value="CAC45855.1"/>
    <property type="molecule type" value="Genomic_DNA"/>
</dbReference>
<dbReference type="RefSeq" id="NP_385382.1">
    <property type="nucleotide sequence ID" value="NC_003047.1"/>
</dbReference>
<dbReference type="SMR" id="Q92QP2"/>
<dbReference type="EnsemblBacteria" id="CAC45855">
    <property type="protein sequence ID" value="CAC45855"/>
    <property type="gene ID" value="SMc01924"/>
</dbReference>
<dbReference type="KEGG" id="sme:SMc01924"/>
<dbReference type="PATRIC" id="fig|266834.11.peg.2690"/>
<dbReference type="eggNOG" id="COG0713">
    <property type="taxonomic scope" value="Bacteria"/>
</dbReference>
<dbReference type="HOGENOM" id="CLU_144724_2_0_5"/>
<dbReference type="OrthoDB" id="9811124at2"/>
<dbReference type="Proteomes" id="UP000001976">
    <property type="component" value="Chromosome"/>
</dbReference>
<dbReference type="GO" id="GO:0030964">
    <property type="term" value="C:NADH dehydrogenase complex"/>
    <property type="evidence" value="ECO:0007669"/>
    <property type="project" value="TreeGrafter"/>
</dbReference>
<dbReference type="GO" id="GO:0005886">
    <property type="term" value="C:plasma membrane"/>
    <property type="evidence" value="ECO:0007669"/>
    <property type="project" value="UniProtKB-SubCell"/>
</dbReference>
<dbReference type="GO" id="GO:0050136">
    <property type="term" value="F:NADH:ubiquinone reductase (non-electrogenic) activity"/>
    <property type="evidence" value="ECO:0007669"/>
    <property type="project" value="UniProtKB-UniRule"/>
</dbReference>
<dbReference type="GO" id="GO:0048038">
    <property type="term" value="F:quinone binding"/>
    <property type="evidence" value="ECO:0007669"/>
    <property type="project" value="UniProtKB-KW"/>
</dbReference>
<dbReference type="GO" id="GO:0042773">
    <property type="term" value="P:ATP synthesis coupled electron transport"/>
    <property type="evidence" value="ECO:0007669"/>
    <property type="project" value="InterPro"/>
</dbReference>
<dbReference type="FunFam" id="1.10.287.3510:FF:000001">
    <property type="entry name" value="NADH-quinone oxidoreductase subunit K"/>
    <property type="match status" value="1"/>
</dbReference>
<dbReference type="Gene3D" id="1.10.287.3510">
    <property type="match status" value="1"/>
</dbReference>
<dbReference type="HAMAP" id="MF_01456">
    <property type="entry name" value="NDH1_NuoK"/>
    <property type="match status" value="1"/>
</dbReference>
<dbReference type="InterPro" id="IPR001133">
    <property type="entry name" value="NADH_UbQ_OxRdtase_chain4L/K"/>
</dbReference>
<dbReference type="InterPro" id="IPR039428">
    <property type="entry name" value="NUOK/Mnh_C1-like"/>
</dbReference>
<dbReference type="NCBIfam" id="NF004320">
    <property type="entry name" value="PRK05715.1-2"/>
    <property type="match status" value="1"/>
</dbReference>
<dbReference type="NCBIfam" id="NF004321">
    <property type="entry name" value="PRK05715.1-3"/>
    <property type="match status" value="1"/>
</dbReference>
<dbReference type="NCBIfam" id="NF004323">
    <property type="entry name" value="PRK05715.1-5"/>
    <property type="match status" value="1"/>
</dbReference>
<dbReference type="PANTHER" id="PTHR11434:SF21">
    <property type="entry name" value="NADH DEHYDROGENASE SUBUNIT 4L-RELATED"/>
    <property type="match status" value="1"/>
</dbReference>
<dbReference type="PANTHER" id="PTHR11434">
    <property type="entry name" value="NADH-UBIQUINONE OXIDOREDUCTASE SUBUNIT ND4L"/>
    <property type="match status" value="1"/>
</dbReference>
<dbReference type="Pfam" id="PF00420">
    <property type="entry name" value="Oxidored_q2"/>
    <property type="match status" value="1"/>
</dbReference>
<feature type="chain" id="PRO_0000390196" description="NADH-quinone oxidoreductase subunit K 1">
    <location>
        <begin position="1"/>
        <end position="102"/>
    </location>
</feature>
<feature type="transmembrane region" description="Helical" evidence="1">
    <location>
        <begin position="5"/>
        <end position="25"/>
    </location>
</feature>
<feature type="transmembrane region" description="Helical" evidence="1">
    <location>
        <begin position="31"/>
        <end position="51"/>
    </location>
</feature>
<feature type="transmembrane region" description="Helical" evidence="1">
    <location>
        <begin position="65"/>
        <end position="85"/>
    </location>
</feature>
<protein>
    <recommendedName>
        <fullName evidence="1">NADH-quinone oxidoreductase subunit K 1</fullName>
        <ecNumber evidence="1">7.1.1.-</ecNumber>
    </recommendedName>
    <alternativeName>
        <fullName evidence="1">NADH dehydrogenase I subunit K 1</fullName>
    </alternativeName>
    <alternativeName>
        <fullName evidence="1">NDH-1 subunit K 1</fullName>
    </alternativeName>
</protein>
<gene>
    <name evidence="1" type="primary">nuoK1</name>
    <name type="ordered locus">R01276</name>
    <name type="ORF">SMc01924</name>
</gene>
<name>NUOK1_RHIME</name>
<sequence length="102" mass="11050">MEIGISHYLTVSAILFTLGVFGIFLNRKNVIIILMSVELILLAVNINMVAFSAFLNDITGQVFALFILTVAAAEAAIGLAILVVFYRNRGSIAVEDVNMMKG</sequence>
<accession>Q92QP2</accession>
<keyword id="KW-0997">Cell inner membrane</keyword>
<keyword id="KW-1003">Cell membrane</keyword>
<keyword id="KW-0472">Membrane</keyword>
<keyword id="KW-0520">NAD</keyword>
<keyword id="KW-0874">Quinone</keyword>
<keyword id="KW-1185">Reference proteome</keyword>
<keyword id="KW-1278">Translocase</keyword>
<keyword id="KW-0812">Transmembrane</keyword>
<keyword id="KW-1133">Transmembrane helix</keyword>
<keyword id="KW-0813">Transport</keyword>
<keyword id="KW-0830">Ubiquinone</keyword>
<organism>
    <name type="scientific">Rhizobium meliloti (strain 1021)</name>
    <name type="common">Ensifer meliloti</name>
    <name type="synonym">Sinorhizobium meliloti</name>
    <dbReference type="NCBI Taxonomy" id="266834"/>
    <lineage>
        <taxon>Bacteria</taxon>
        <taxon>Pseudomonadati</taxon>
        <taxon>Pseudomonadota</taxon>
        <taxon>Alphaproteobacteria</taxon>
        <taxon>Hyphomicrobiales</taxon>
        <taxon>Rhizobiaceae</taxon>
        <taxon>Sinorhizobium/Ensifer group</taxon>
        <taxon>Sinorhizobium</taxon>
    </lineage>
</organism>
<comment type="function">
    <text evidence="1">NDH-1 shuttles electrons from NADH, via FMN and iron-sulfur (Fe-S) centers, to quinones in the respiratory chain. The immediate electron acceptor for the enzyme in this species is believed to be ubiquinone. Couples the redox reaction to proton translocation (for every two electrons transferred, four hydrogen ions are translocated across the cytoplasmic membrane), and thus conserves the redox energy in a proton gradient.</text>
</comment>
<comment type="catalytic activity">
    <reaction evidence="1">
        <text>a quinone + NADH + 5 H(+)(in) = a quinol + NAD(+) + 4 H(+)(out)</text>
        <dbReference type="Rhea" id="RHEA:57888"/>
        <dbReference type="ChEBI" id="CHEBI:15378"/>
        <dbReference type="ChEBI" id="CHEBI:24646"/>
        <dbReference type="ChEBI" id="CHEBI:57540"/>
        <dbReference type="ChEBI" id="CHEBI:57945"/>
        <dbReference type="ChEBI" id="CHEBI:132124"/>
    </reaction>
</comment>
<comment type="subunit">
    <text evidence="1">NDH-1 is composed of 14 different subunits. Subunits NuoA, H, J, K, L, M, N constitute the membrane sector of the complex.</text>
</comment>
<comment type="subcellular location">
    <subcellularLocation>
        <location evidence="1">Cell inner membrane</location>
        <topology evidence="1">Multi-pass membrane protein</topology>
    </subcellularLocation>
</comment>
<comment type="similarity">
    <text evidence="1">Belongs to the complex I subunit 4L family.</text>
</comment>
<proteinExistence type="inferred from homology"/>
<evidence type="ECO:0000255" key="1">
    <source>
        <dbReference type="HAMAP-Rule" id="MF_01456"/>
    </source>
</evidence>